<comment type="subcellular location">
    <subcellularLocation>
        <location evidence="6">Cytoplasm</location>
        <location evidence="6">Cytoskeleton</location>
    </subcellularLocation>
</comment>
<comment type="tissue specificity">
    <text evidence="5">Expressed in the liver.</text>
</comment>
<comment type="similarity">
    <text evidence="3">Belongs to the TRAFAC class myosin-kinesin ATPase superfamily. Kinesin family.</text>
</comment>
<keyword id="KW-0067">ATP-binding</keyword>
<keyword id="KW-0175">Coiled coil</keyword>
<keyword id="KW-0963">Cytoplasm</keyword>
<keyword id="KW-0206">Cytoskeleton</keyword>
<keyword id="KW-0493">Microtubule</keyword>
<keyword id="KW-0505">Motor protein</keyword>
<keyword id="KW-0547">Nucleotide-binding</keyword>
<keyword id="KW-0597">Phosphoprotein</keyword>
<keyword id="KW-1185">Reference proteome</keyword>
<accession>Q9D2Z8</accession>
<accession>O35061</accession>
<sequence length="642" mass="70706">MEERGSPDGDPARNLEQGPEGSETPIQVVLRVRPMSTVELRRGEQSALHCSGTRTLQVSPDVAFRFGAVLDGARTQEDVFRACGVKRLGELALRGFSCTVFTFGQTGSGKTYTLTGPPPQGEGVPVPPSLAGIMQRTFTWLLDRVQHLDSPVTLRASYLEIYNEQVWDLLSLGSPRPLPVRWTKARGFYVEQLRVVEFGSLEALMELLQMGLSRRRSSSHTLNQASSRSHALLTLHISRPTSQQVPPVDLGEPPVGGKLCFVDLAGSEKVAATGSQGQLMLEANSINRSLLALGHCISLLLDPQRKQNHIPFRDSKLTKLLADSLGGRGVTLMVACVSPSAQCLPETLSTLRYASRAQRITTRPQGPKSPGVKPPQQVENELLRLQEENRHLRFQLDQMHTTAPGAHGARMAWAQRNLYGMLQEFMLENERLRKEMRQLRSSRDLARAEQRVLAQQVHDLERRLLSACPLPQQGSTPVCPCRMVPAASCHALPPLCYCHHFCPLCRVPLAHWTCPRRECHMPQVLEPEAPGHISQSVWPPPWAPPPSPGSAKPPRERSQSDWTQTRVLAEMLMGEEVVPSAPPLSAGPSNMPYGLRGGSGIPNLTPRLETLTQQINSSLHLSQRQPQPSEDTQSPGQGLSSC</sequence>
<feature type="chain" id="PRO_0000125445" description="Kinesin-like protein KIF12">
    <location>
        <begin position="1"/>
        <end position="642"/>
    </location>
</feature>
<feature type="domain" description="Kinesin motor" evidence="3">
    <location>
        <begin position="25"/>
        <end position="360"/>
    </location>
</feature>
<feature type="region of interest" description="Disordered" evidence="4">
    <location>
        <begin position="1"/>
        <end position="25"/>
    </location>
</feature>
<feature type="region of interest" description="Disordered" evidence="4">
    <location>
        <begin position="531"/>
        <end position="561"/>
    </location>
</feature>
<feature type="region of interest" description="Disordered" evidence="4">
    <location>
        <begin position="579"/>
        <end position="642"/>
    </location>
</feature>
<feature type="coiled-coil region" evidence="2">
    <location>
        <begin position="376"/>
        <end position="465"/>
    </location>
</feature>
<feature type="compositionally biased region" description="Basic and acidic residues" evidence="4">
    <location>
        <begin position="1"/>
        <end position="13"/>
    </location>
</feature>
<feature type="compositionally biased region" description="Pro residues" evidence="4">
    <location>
        <begin position="538"/>
        <end position="548"/>
    </location>
</feature>
<feature type="compositionally biased region" description="Polar residues" evidence="4">
    <location>
        <begin position="610"/>
        <end position="642"/>
    </location>
</feature>
<feature type="binding site" evidence="3">
    <location>
        <begin position="104"/>
        <end position="111"/>
    </location>
    <ligand>
        <name>ATP</name>
        <dbReference type="ChEBI" id="CHEBI:30616"/>
    </ligand>
</feature>
<feature type="modified residue" description="Phosphoserine" evidence="1">
    <location>
        <position position="6"/>
    </location>
</feature>
<feature type="modified residue" description="Phosphoserine" evidence="7">
    <location>
        <position position="369"/>
    </location>
</feature>
<feature type="modified residue" description="Phosphoserine" evidence="1">
    <location>
        <position position="634"/>
    </location>
</feature>
<feature type="sequence conflict" description="In Ref. 3; BAA22388." evidence="6" ref="3">
    <original>VFTF</original>
    <variation>IFAY</variation>
    <location>
        <begin position="100"/>
        <end position="103"/>
    </location>
</feature>
<organism>
    <name type="scientific">Mus musculus</name>
    <name type="common">Mouse</name>
    <dbReference type="NCBI Taxonomy" id="10090"/>
    <lineage>
        <taxon>Eukaryota</taxon>
        <taxon>Metazoa</taxon>
        <taxon>Chordata</taxon>
        <taxon>Craniata</taxon>
        <taxon>Vertebrata</taxon>
        <taxon>Euteleostomi</taxon>
        <taxon>Mammalia</taxon>
        <taxon>Eutheria</taxon>
        <taxon>Euarchontoglires</taxon>
        <taxon>Glires</taxon>
        <taxon>Rodentia</taxon>
        <taxon>Myomorpha</taxon>
        <taxon>Muroidea</taxon>
        <taxon>Muridae</taxon>
        <taxon>Murinae</taxon>
        <taxon>Mus</taxon>
        <taxon>Mus</taxon>
    </lineage>
</organism>
<proteinExistence type="evidence at protein level"/>
<gene>
    <name type="primary">Kif12</name>
</gene>
<protein>
    <recommendedName>
        <fullName>Kinesin-like protein KIF12</fullName>
    </recommendedName>
</protein>
<evidence type="ECO:0000250" key="1">
    <source>
        <dbReference type="UniProtKB" id="Q96FN5"/>
    </source>
</evidence>
<evidence type="ECO:0000255" key="2"/>
<evidence type="ECO:0000255" key="3">
    <source>
        <dbReference type="PROSITE-ProRule" id="PRU00283"/>
    </source>
</evidence>
<evidence type="ECO:0000256" key="4">
    <source>
        <dbReference type="SAM" id="MobiDB-lite"/>
    </source>
</evidence>
<evidence type="ECO:0000269" key="5">
    <source>
    </source>
</evidence>
<evidence type="ECO:0000305" key="6"/>
<evidence type="ECO:0007744" key="7">
    <source>
    </source>
</evidence>
<name>KIF12_MOUSE</name>
<dbReference type="EMBL" id="AK018598">
    <property type="protein sequence ID" value="BAB31300.1"/>
    <property type="molecule type" value="mRNA"/>
</dbReference>
<dbReference type="EMBL" id="AL691496">
    <property type="status" value="NOT_ANNOTATED_CDS"/>
    <property type="molecule type" value="Genomic_DNA"/>
</dbReference>
<dbReference type="EMBL" id="AB001428">
    <property type="protein sequence ID" value="BAA22388.1"/>
    <property type="molecule type" value="mRNA"/>
</dbReference>
<dbReference type="CCDS" id="CCDS18249.1"/>
<dbReference type="RefSeq" id="NP_034746.1">
    <property type="nucleotide sequence ID" value="NM_010616.3"/>
</dbReference>
<dbReference type="SMR" id="Q9D2Z8"/>
<dbReference type="FunCoup" id="Q9D2Z8">
    <property type="interactions" value="17"/>
</dbReference>
<dbReference type="STRING" id="10090.ENSMUSP00000030042"/>
<dbReference type="iPTMnet" id="Q9D2Z8"/>
<dbReference type="PhosphoSitePlus" id="Q9D2Z8"/>
<dbReference type="PaxDb" id="10090-ENSMUSP00000030042"/>
<dbReference type="ProteomicsDB" id="263529"/>
<dbReference type="Antibodypedia" id="15422">
    <property type="antibodies" value="77 antibodies from 20 providers"/>
</dbReference>
<dbReference type="DNASU" id="16552"/>
<dbReference type="Ensembl" id="ENSMUST00000030042.3">
    <property type="protein sequence ID" value="ENSMUSP00000030042.3"/>
    <property type="gene ID" value="ENSMUSG00000028357.14"/>
</dbReference>
<dbReference type="GeneID" id="16552"/>
<dbReference type="KEGG" id="mmu:16552"/>
<dbReference type="UCSC" id="uc008tfq.1">
    <property type="organism name" value="mouse"/>
</dbReference>
<dbReference type="AGR" id="MGI:1098232"/>
<dbReference type="CTD" id="113220"/>
<dbReference type="MGI" id="MGI:1098232">
    <property type="gene designation" value="Kif12"/>
</dbReference>
<dbReference type="VEuPathDB" id="HostDB:ENSMUSG00000028357"/>
<dbReference type="eggNOG" id="KOG4280">
    <property type="taxonomic scope" value="Eukaryota"/>
</dbReference>
<dbReference type="GeneTree" id="ENSGT00940000161216"/>
<dbReference type="HOGENOM" id="CLU_001485_2_1_1"/>
<dbReference type="InParanoid" id="Q9D2Z8"/>
<dbReference type="OMA" id="VYSCPCC"/>
<dbReference type="OrthoDB" id="3176171at2759"/>
<dbReference type="PhylomeDB" id="Q9D2Z8"/>
<dbReference type="TreeFam" id="TF324584"/>
<dbReference type="Reactome" id="R-MMU-2132295">
    <property type="pathway name" value="MHC class II antigen presentation"/>
</dbReference>
<dbReference type="Reactome" id="R-MMU-6811434">
    <property type="pathway name" value="COPI-dependent Golgi-to-ER retrograde traffic"/>
</dbReference>
<dbReference type="Reactome" id="R-MMU-983189">
    <property type="pathway name" value="Kinesins"/>
</dbReference>
<dbReference type="BioGRID-ORCS" id="16552">
    <property type="hits" value="2 hits in 78 CRISPR screens"/>
</dbReference>
<dbReference type="PRO" id="PR:Q9D2Z8"/>
<dbReference type="Proteomes" id="UP000000589">
    <property type="component" value="Chromosome 4"/>
</dbReference>
<dbReference type="RNAct" id="Q9D2Z8">
    <property type="molecule type" value="protein"/>
</dbReference>
<dbReference type="Bgee" id="ENSMUSG00000028357">
    <property type="expression patterns" value="Expressed in right kidney and 48 other cell types or tissues"/>
</dbReference>
<dbReference type="ExpressionAtlas" id="Q9D2Z8">
    <property type="expression patterns" value="baseline and differential"/>
</dbReference>
<dbReference type="GO" id="GO:0005737">
    <property type="term" value="C:cytoplasm"/>
    <property type="evidence" value="ECO:0007669"/>
    <property type="project" value="UniProtKB-KW"/>
</dbReference>
<dbReference type="GO" id="GO:0005874">
    <property type="term" value="C:microtubule"/>
    <property type="evidence" value="ECO:0007669"/>
    <property type="project" value="UniProtKB-KW"/>
</dbReference>
<dbReference type="GO" id="GO:0005815">
    <property type="term" value="C:microtubule organizing center"/>
    <property type="evidence" value="ECO:0000314"/>
    <property type="project" value="MGI"/>
</dbReference>
<dbReference type="GO" id="GO:0005524">
    <property type="term" value="F:ATP binding"/>
    <property type="evidence" value="ECO:0007669"/>
    <property type="project" value="UniProtKB-KW"/>
</dbReference>
<dbReference type="GO" id="GO:0008017">
    <property type="term" value="F:microtubule binding"/>
    <property type="evidence" value="ECO:0007669"/>
    <property type="project" value="InterPro"/>
</dbReference>
<dbReference type="GO" id="GO:0003777">
    <property type="term" value="F:microtubule motor activity"/>
    <property type="evidence" value="ECO:0007669"/>
    <property type="project" value="InterPro"/>
</dbReference>
<dbReference type="GO" id="GO:0007018">
    <property type="term" value="P:microtubule-based movement"/>
    <property type="evidence" value="ECO:0007669"/>
    <property type="project" value="InterPro"/>
</dbReference>
<dbReference type="CDD" id="cd00106">
    <property type="entry name" value="KISc"/>
    <property type="match status" value="1"/>
</dbReference>
<dbReference type="FunFam" id="3.40.850.10:FF:000064">
    <property type="entry name" value="Kinesin-like protein"/>
    <property type="match status" value="1"/>
</dbReference>
<dbReference type="Gene3D" id="3.40.850.10">
    <property type="entry name" value="Kinesin motor domain"/>
    <property type="match status" value="1"/>
</dbReference>
<dbReference type="InterPro" id="IPR027640">
    <property type="entry name" value="Kinesin-like_fam"/>
</dbReference>
<dbReference type="InterPro" id="IPR019821">
    <property type="entry name" value="Kinesin_motor_CS"/>
</dbReference>
<dbReference type="InterPro" id="IPR001752">
    <property type="entry name" value="Kinesin_motor_dom"/>
</dbReference>
<dbReference type="InterPro" id="IPR036961">
    <property type="entry name" value="Kinesin_motor_dom_sf"/>
</dbReference>
<dbReference type="InterPro" id="IPR027417">
    <property type="entry name" value="P-loop_NTPase"/>
</dbReference>
<dbReference type="PANTHER" id="PTHR47969">
    <property type="entry name" value="CHROMOSOME-ASSOCIATED KINESIN KIF4A-RELATED"/>
    <property type="match status" value="1"/>
</dbReference>
<dbReference type="PANTHER" id="PTHR47969:SF33">
    <property type="entry name" value="KINESIN-LIKE PROTEIN"/>
    <property type="match status" value="1"/>
</dbReference>
<dbReference type="Pfam" id="PF00225">
    <property type="entry name" value="Kinesin"/>
    <property type="match status" value="1"/>
</dbReference>
<dbReference type="PRINTS" id="PR00380">
    <property type="entry name" value="KINESINHEAVY"/>
</dbReference>
<dbReference type="SMART" id="SM00129">
    <property type="entry name" value="KISc"/>
    <property type="match status" value="1"/>
</dbReference>
<dbReference type="SUPFAM" id="SSF52540">
    <property type="entry name" value="P-loop containing nucleoside triphosphate hydrolases"/>
    <property type="match status" value="1"/>
</dbReference>
<dbReference type="PROSITE" id="PS00411">
    <property type="entry name" value="KINESIN_MOTOR_1"/>
    <property type="match status" value="1"/>
</dbReference>
<dbReference type="PROSITE" id="PS50067">
    <property type="entry name" value="KINESIN_MOTOR_2"/>
    <property type="match status" value="1"/>
</dbReference>
<reference key="1">
    <citation type="journal article" date="2005" name="Science">
        <title>The transcriptional landscape of the mammalian genome.</title>
        <authorList>
            <person name="Carninci P."/>
            <person name="Kasukawa T."/>
            <person name="Katayama S."/>
            <person name="Gough J."/>
            <person name="Frith M.C."/>
            <person name="Maeda N."/>
            <person name="Oyama R."/>
            <person name="Ravasi T."/>
            <person name="Lenhard B."/>
            <person name="Wells C."/>
            <person name="Kodzius R."/>
            <person name="Shimokawa K."/>
            <person name="Bajic V.B."/>
            <person name="Brenner S.E."/>
            <person name="Batalov S."/>
            <person name="Forrest A.R."/>
            <person name="Zavolan M."/>
            <person name="Davis M.J."/>
            <person name="Wilming L.G."/>
            <person name="Aidinis V."/>
            <person name="Allen J.E."/>
            <person name="Ambesi-Impiombato A."/>
            <person name="Apweiler R."/>
            <person name="Aturaliya R.N."/>
            <person name="Bailey T.L."/>
            <person name="Bansal M."/>
            <person name="Baxter L."/>
            <person name="Beisel K.W."/>
            <person name="Bersano T."/>
            <person name="Bono H."/>
            <person name="Chalk A.M."/>
            <person name="Chiu K.P."/>
            <person name="Choudhary V."/>
            <person name="Christoffels A."/>
            <person name="Clutterbuck D.R."/>
            <person name="Crowe M.L."/>
            <person name="Dalla E."/>
            <person name="Dalrymple B.P."/>
            <person name="de Bono B."/>
            <person name="Della Gatta G."/>
            <person name="di Bernardo D."/>
            <person name="Down T."/>
            <person name="Engstrom P."/>
            <person name="Fagiolini M."/>
            <person name="Faulkner G."/>
            <person name="Fletcher C.F."/>
            <person name="Fukushima T."/>
            <person name="Furuno M."/>
            <person name="Futaki S."/>
            <person name="Gariboldi M."/>
            <person name="Georgii-Hemming P."/>
            <person name="Gingeras T.R."/>
            <person name="Gojobori T."/>
            <person name="Green R.E."/>
            <person name="Gustincich S."/>
            <person name="Harbers M."/>
            <person name="Hayashi Y."/>
            <person name="Hensch T.K."/>
            <person name="Hirokawa N."/>
            <person name="Hill D."/>
            <person name="Huminiecki L."/>
            <person name="Iacono M."/>
            <person name="Ikeo K."/>
            <person name="Iwama A."/>
            <person name="Ishikawa T."/>
            <person name="Jakt M."/>
            <person name="Kanapin A."/>
            <person name="Katoh M."/>
            <person name="Kawasawa Y."/>
            <person name="Kelso J."/>
            <person name="Kitamura H."/>
            <person name="Kitano H."/>
            <person name="Kollias G."/>
            <person name="Krishnan S.P."/>
            <person name="Kruger A."/>
            <person name="Kummerfeld S.K."/>
            <person name="Kurochkin I.V."/>
            <person name="Lareau L.F."/>
            <person name="Lazarevic D."/>
            <person name="Lipovich L."/>
            <person name="Liu J."/>
            <person name="Liuni S."/>
            <person name="McWilliam S."/>
            <person name="Madan Babu M."/>
            <person name="Madera M."/>
            <person name="Marchionni L."/>
            <person name="Matsuda H."/>
            <person name="Matsuzawa S."/>
            <person name="Miki H."/>
            <person name="Mignone F."/>
            <person name="Miyake S."/>
            <person name="Morris K."/>
            <person name="Mottagui-Tabar S."/>
            <person name="Mulder N."/>
            <person name="Nakano N."/>
            <person name="Nakauchi H."/>
            <person name="Ng P."/>
            <person name="Nilsson R."/>
            <person name="Nishiguchi S."/>
            <person name="Nishikawa S."/>
            <person name="Nori F."/>
            <person name="Ohara O."/>
            <person name="Okazaki Y."/>
            <person name="Orlando V."/>
            <person name="Pang K.C."/>
            <person name="Pavan W.J."/>
            <person name="Pavesi G."/>
            <person name="Pesole G."/>
            <person name="Petrovsky N."/>
            <person name="Piazza S."/>
            <person name="Reed J."/>
            <person name="Reid J.F."/>
            <person name="Ring B.Z."/>
            <person name="Ringwald M."/>
            <person name="Rost B."/>
            <person name="Ruan Y."/>
            <person name="Salzberg S.L."/>
            <person name="Sandelin A."/>
            <person name="Schneider C."/>
            <person name="Schoenbach C."/>
            <person name="Sekiguchi K."/>
            <person name="Semple C.A."/>
            <person name="Seno S."/>
            <person name="Sessa L."/>
            <person name="Sheng Y."/>
            <person name="Shibata Y."/>
            <person name="Shimada H."/>
            <person name="Shimada K."/>
            <person name="Silva D."/>
            <person name="Sinclair B."/>
            <person name="Sperling S."/>
            <person name="Stupka E."/>
            <person name="Sugiura K."/>
            <person name="Sultana R."/>
            <person name="Takenaka Y."/>
            <person name="Taki K."/>
            <person name="Tammoja K."/>
            <person name="Tan S.L."/>
            <person name="Tang S."/>
            <person name="Taylor M.S."/>
            <person name="Tegner J."/>
            <person name="Teichmann S.A."/>
            <person name="Ueda H.R."/>
            <person name="van Nimwegen E."/>
            <person name="Verardo R."/>
            <person name="Wei C.L."/>
            <person name="Yagi K."/>
            <person name="Yamanishi H."/>
            <person name="Zabarovsky E."/>
            <person name="Zhu S."/>
            <person name="Zimmer A."/>
            <person name="Hide W."/>
            <person name="Bult C."/>
            <person name="Grimmond S.M."/>
            <person name="Teasdale R.D."/>
            <person name="Liu E.T."/>
            <person name="Brusic V."/>
            <person name="Quackenbush J."/>
            <person name="Wahlestedt C."/>
            <person name="Mattick J.S."/>
            <person name="Hume D.A."/>
            <person name="Kai C."/>
            <person name="Sasaki D."/>
            <person name="Tomaru Y."/>
            <person name="Fukuda S."/>
            <person name="Kanamori-Katayama M."/>
            <person name="Suzuki M."/>
            <person name="Aoki J."/>
            <person name="Arakawa T."/>
            <person name="Iida J."/>
            <person name="Imamura K."/>
            <person name="Itoh M."/>
            <person name="Kato T."/>
            <person name="Kawaji H."/>
            <person name="Kawagashira N."/>
            <person name="Kawashima T."/>
            <person name="Kojima M."/>
            <person name="Kondo S."/>
            <person name="Konno H."/>
            <person name="Nakano K."/>
            <person name="Ninomiya N."/>
            <person name="Nishio T."/>
            <person name="Okada M."/>
            <person name="Plessy C."/>
            <person name="Shibata K."/>
            <person name="Shiraki T."/>
            <person name="Suzuki S."/>
            <person name="Tagami M."/>
            <person name="Waki K."/>
            <person name="Watahiki A."/>
            <person name="Okamura-Oho Y."/>
            <person name="Suzuki H."/>
            <person name="Kawai J."/>
            <person name="Hayashizaki Y."/>
        </authorList>
    </citation>
    <scope>NUCLEOTIDE SEQUENCE [LARGE SCALE MRNA]</scope>
    <source>
        <strain>C57BL/6J</strain>
        <tissue>Cecum</tissue>
    </source>
</reference>
<reference key="2">
    <citation type="submission" date="2003-03" db="EMBL/GenBank/DDBJ databases">
        <authorList>
            <person name="Matthews L."/>
        </authorList>
    </citation>
    <scope>NUCLEOTIDE SEQUENCE [GENOMIC DNA]</scope>
</reference>
<reference key="3">
    <citation type="journal article" date="1997" name="Proc. Natl. Acad. Sci. U.S.A.">
        <title>Identification and classification of 16 new kinesin superfamily (KIF) proteins in mouse genome.</title>
        <authorList>
            <person name="Nakagawa T."/>
            <person name="Tanaka Y."/>
            <person name="Matsuoka E."/>
            <person name="Kondo S."/>
            <person name="Okada Y."/>
            <person name="Noda Y."/>
            <person name="Kanai Y."/>
            <person name="Hirokawa N."/>
        </authorList>
    </citation>
    <scope>NUCLEOTIDE SEQUENCE [MRNA] OF 100-268</scope>
    <source>
        <strain>ICR</strain>
    </source>
</reference>
<reference key="4">
    <citation type="journal article" date="2010" name="Cell">
        <title>A tissue-specific atlas of mouse protein phosphorylation and expression.</title>
        <authorList>
            <person name="Huttlin E.L."/>
            <person name="Jedrychowski M.P."/>
            <person name="Elias J.E."/>
            <person name="Goswami T."/>
            <person name="Rad R."/>
            <person name="Beausoleil S.A."/>
            <person name="Villen J."/>
            <person name="Haas W."/>
            <person name="Sowa M.E."/>
            <person name="Gygi S.P."/>
        </authorList>
    </citation>
    <scope>PHOSPHORYLATION [LARGE SCALE ANALYSIS] AT SER-369</scope>
    <scope>IDENTIFICATION BY MASS SPECTROMETRY [LARGE SCALE ANALYSIS]</scope>
    <source>
        <tissue>Kidney</tissue>
    </source>
</reference>
<reference key="5">
    <citation type="journal article" date="2019" name="Genet. Med.">
        <title>Identification of novel loci for pediatric cholestatic liver disease defined by KIF12, PPM1F, USP53, LSR, and WDR83OS pathogenic variants.</title>
        <authorList>
            <person name="Maddirevula S."/>
            <person name="Alhebbi H."/>
            <person name="Alqahtani A."/>
            <person name="Algoufi T."/>
            <person name="Alsaif H.S."/>
            <person name="Ibrahim N."/>
            <person name="Abdulwahab F."/>
            <person name="Barr M."/>
            <person name="Alzaidan H."/>
            <person name="Almehaideb A."/>
            <person name="AlSasi O."/>
            <person name="Alhashem A."/>
            <person name="Hussaini H.A."/>
            <person name="Wali S."/>
            <person name="Alkuraya F.S."/>
        </authorList>
    </citation>
    <scope>TISSUE SPECIFICITY</scope>
</reference>